<accession>A5UFW9</accession>
<proteinExistence type="inferred from homology"/>
<organism>
    <name type="scientific">Haemophilus influenzae (strain PittGG)</name>
    <dbReference type="NCBI Taxonomy" id="374931"/>
    <lineage>
        <taxon>Bacteria</taxon>
        <taxon>Pseudomonadati</taxon>
        <taxon>Pseudomonadota</taxon>
        <taxon>Gammaproteobacteria</taxon>
        <taxon>Pasteurellales</taxon>
        <taxon>Pasteurellaceae</taxon>
        <taxon>Haemophilus</taxon>
    </lineage>
</organism>
<comment type="function">
    <text evidence="1">NQR complex catalyzes the reduction of ubiquinone-1 to ubiquinol by two successive reactions, coupled with the transport of Na(+) ions from the cytoplasm to the periplasm. NqrA to NqrE are probably involved in the second step, the conversion of ubisemiquinone to ubiquinol.</text>
</comment>
<comment type="catalytic activity">
    <reaction evidence="1">
        <text>a ubiquinone + n Na(+)(in) + NADH + H(+) = a ubiquinol + n Na(+)(out) + NAD(+)</text>
        <dbReference type="Rhea" id="RHEA:47748"/>
        <dbReference type="Rhea" id="RHEA-COMP:9565"/>
        <dbReference type="Rhea" id="RHEA-COMP:9566"/>
        <dbReference type="ChEBI" id="CHEBI:15378"/>
        <dbReference type="ChEBI" id="CHEBI:16389"/>
        <dbReference type="ChEBI" id="CHEBI:17976"/>
        <dbReference type="ChEBI" id="CHEBI:29101"/>
        <dbReference type="ChEBI" id="CHEBI:57540"/>
        <dbReference type="ChEBI" id="CHEBI:57945"/>
        <dbReference type="EC" id="7.2.1.1"/>
    </reaction>
</comment>
<comment type="cofactor">
    <cofactor evidence="1">
        <name>FMN</name>
        <dbReference type="ChEBI" id="CHEBI:58210"/>
    </cofactor>
</comment>
<comment type="subunit">
    <text evidence="1">Composed of six subunits; NqrA, NqrB, NqrC, NqrD, NqrE and NqrF.</text>
</comment>
<comment type="subcellular location">
    <subcellularLocation>
        <location evidence="1">Cell inner membrane</location>
        <topology evidence="1">Multi-pass membrane protein</topology>
    </subcellularLocation>
</comment>
<comment type="similarity">
    <text evidence="1">Belongs to the NqrB/RnfD family.</text>
</comment>
<keyword id="KW-0997">Cell inner membrane</keyword>
<keyword id="KW-1003">Cell membrane</keyword>
<keyword id="KW-0285">Flavoprotein</keyword>
<keyword id="KW-0288">FMN</keyword>
<keyword id="KW-0406">Ion transport</keyword>
<keyword id="KW-0472">Membrane</keyword>
<keyword id="KW-0520">NAD</keyword>
<keyword id="KW-0597">Phosphoprotein</keyword>
<keyword id="KW-0915">Sodium</keyword>
<keyword id="KW-0739">Sodium transport</keyword>
<keyword id="KW-1278">Translocase</keyword>
<keyword id="KW-0812">Transmembrane</keyword>
<keyword id="KW-1133">Transmembrane helix</keyword>
<keyword id="KW-0813">Transport</keyword>
<keyword id="KW-0830">Ubiquinone</keyword>
<sequence length="411" mass="44729">MGLKNLFEKMEPAFLPGGKYSKLYPIFESIYTLLYTPGTVTHKNTHVRDALDSKRMMITVFLALFPAIFYGMYNVGNQAIPALNQLGNLDQLIANDWHYALASSLGLDLTANATWGSKMALGAIFFLPIYLVVFTVCTIWELLFSVVRGHEVNEGMFVSTILFALIVPPTLPLWQAALGITFGIIVAKEIFGGVGRNFMNPALAGRAFLFFAYPAQISGDTVWTAADGFSGATALSQWSQGGQGALQHTVTGAPITWMDAFVGNLPGSMGEVSTLAILIGGAVIVFTRIAAWRIIAGVMIGMIATSTLFNLIGSETNPMFSMPWHWHFVLGGFALGMVFMATDPVSASFTNTGKWWYGALIGVMAVLIRTVNPAYPEGMMLAILFANLFAPIFDYIVVQANIKRRRARTNG</sequence>
<evidence type="ECO:0000255" key="1">
    <source>
        <dbReference type="HAMAP-Rule" id="MF_00426"/>
    </source>
</evidence>
<feature type="chain" id="PRO_1000060140" description="Na(+)-translocating NADH-quinone reductase subunit B">
    <location>
        <begin position="1"/>
        <end position="411"/>
    </location>
</feature>
<feature type="transmembrane region" description="Helical" evidence="1">
    <location>
        <begin position="56"/>
        <end position="76"/>
    </location>
</feature>
<feature type="transmembrane region" description="Helical" evidence="1">
    <location>
        <begin position="120"/>
        <end position="140"/>
    </location>
</feature>
<feature type="transmembrane region" description="Helical" evidence="1">
    <location>
        <begin position="166"/>
        <end position="186"/>
    </location>
</feature>
<feature type="transmembrane region" description="Helical" evidence="1">
    <location>
        <begin position="272"/>
        <end position="292"/>
    </location>
</feature>
<feature type="transmembrane region" description="Helical" evidence="1">
    <location>
        <begin position="294"/>
        <end position="314"/>
    </location>
</feature>
<feature type="transmembrane region" description="Helical" evidence="1">
    <location>
        <begin position="319"/>
        <end position="339"/>
    </location>
</feature>
<feature type="transmembrane region" description="Helical" evidence="1">
    <location>
        <begin position="348"/>
        <end position="368"/>
    </location>
</feature>
<feature type="transmembrane region" description="Helical" evidence="1">
    <location>
        <begin position="378"/>
        <end position="398"/>
    </location>
</feature>
<feature type="modified residue" description="FMN phosphoryl threonine" evidence="1">
    <location>
        <position position="233"/>
    </location>
</feature>
<name>NQRB_HAEIG</name>
<dbReference type="EC" id="7.2.1.1" evidence="1"/>
<dbReference type="EMBL" id="CP000672">
    <property type="protein sequence ID" value="ABQ99674.1"/>
    <property type="molecule type" value="Genomic_DNA"/>
</dbReference>
<dbReference type="SMR" id="A5UFW9"/>
<dbReference type="KEGG" id="hiq:CGSHiGG_03430"/>
<dbReference type="HOGENOM" id="CLU_042020_1_1_6"/>
<dbReference type="Proteomes" id="UP000001990">
    <property type="component" value="Chromosome"/>
</dbReference>
<dbReference type="GO" id="GO:0005886">
    <property type="term" value="C:plasma membrane"/>
    <property type="evidence" value="ECO:0007669"/>
    <property type="project" value="UniProtKB-SubCell"/>
</dbReference>
<dbReference type="GO" id="GO:0010181">
    <property type="term" value="F:FMN binding"/>
    <property type="evidence" value="ECO:0007669"/>
    <property type="project" value="InterPro"/>
</dbReference>
<dbReference type="GO" id="GO:0016655">
    <property type="term" value="F:oxidoreductase activity, acting on NAD(P)H, quinone or similar compound as acceptor"/>
    <property type="evidence" value="ECO:0007669"/>
    <property type="project" value="UniProtKB-UniRule"/>
</dbReference>
<dbReference type="GO" id="GO:0022904">
    <property type="term" value="P:respiratory electron transport chain"/>
    <property type="evidence" value="ECO:0007669"/>
    <property type="project" value="InterPro"/>
</dbReference>
<dbReference type="GO" id="GO:0006814">
    <property type="term" value="P:sodium ion transport"/>
    <property type="evidence" value="ECO:0007669"/>
    <property type="project" value="UniProtKB-UniRule"/>
</dbReference>
<dbReference type="GO" id="GO:0055085">
    <property type="term" value="P:transmembrane transport"/>
    <property type="evidence" value="ECO:0007669"/>
    <property type="project" value="InterPro"/>
</dbReference>
<dbReference type="HAMAP" id="MF_00426">
    <property type="entry name" value="NqrB"/>
    <property type="match status" value="1"/>
</dbReference>
<dbReference type="InterPro" id="IPR010966">
    <property type="entry name" value="NqrB"/>
</dbReference>
<dbReference type="InterPro" id="IPR004338">
    <property type="entry name" value="NqrB/RnfD"/>
</dbReference>
<dbReference type="NCBIfam" id="TIGR01937">
    <property type="entry name" value="nqrB"/>
    <property type="match status" value="1"/>
</dbReference>
<dbReference type="NCBIfam" id="NF003756">
    <property type="entry name" value="PRK05349.1"/>
    <property type="match status" value="1"/>
</dbReference>
<dbReference type="PANTHER" id="PTHR30578">
    <property type="entry name" value="ELECTRON TRANSPORT COMPLEX PROTEIN RNFD"/>
    <property type="match status" value="1"/>
</dbReference>
<dbReference type="PANTHER" id="PTHR30578:SF1">
    <property type="entry name" value="NA(+)-TRANSLOCATING NADH-QUINONE REDUCTASE SUBUNIT B"/>
    <property type="match status" value="1"/>
</dbReference>
<dbReference type="Pfam" id="PF03116">
    <property type="entry name" value="NQR2_RnfD_RnfE"/>
    <property type="match status" value="1"/>
</dbReference>
<dbReference type="PIRSF" id="PIRSF016055">
    <property type="entry name" value="NADH-UbQ_OxRdtase_B_su"/>
    <property type="match status" value="1"/>
</dbReference>
<protein>
    <recommendedName>
        <fullName evidence="1">Na(+)-translocating NADH-quinone reductase subunit B</fullName>
        <shortName evidence="1">Na(+)-NQR subunit B</shortName>
        <shortName evidence="1">Na(+)-translocating NQR subunit B</shortName>
        <ecNumber evidence="1">7.2.1.1</ecNumber>
    </recommendedName>
    <alternativeName>
        <fullName evidence="1">NQR complex subunit B</fullName>
    </alternativeName>
    <alternativeName>
        <fullName evidence="1">NQR-1 subunit B</fullName>
    </alternativeName>
</protein>
<gene>
    <name evidence="1" type="primary">nqrB</name>
    <name type="ordered locus">CGSHiGG_03430</name>
</gene>
<reference key="1">
    <citation type="journal article" date="2007" name="Genome Biol.">
        <title>Characterization and modeling of the Haemophilus influenzae core and supragenomes based on the complete genomic sequences of Rd and 12 clinical nontypeable strains.</title>
        <authorList>
            <person name="Hogg J.S."/>
            <person name="Hu F.Z."/>
            <person name="Janto B."/>
            <person name="Boissy R."/>
            <person name="Hayes J."/>
            <person name="Keefe R."/>
            <person name="Post J.C."/>
            <person name="Ehrlich G.D."/>
        </authorList>
    </citation>
    <scope>NUCLEOTIDE SEQUENCE [LARGE SCALE GENOMIC DNA]</scope>
    <source>
        <strain>PittGG</strain>
    </source>
</reference>